<organism>
    <name type="scientific">Homo sapiens</name>
    <name type="common">Human</name>
    <dbReference type="NCBI Taxonomy" id="9606"/>
    <lineage>
        <taxon>Eukaryota</taxon>
        <taxon>Metazoa</taxon>
        <taxon>Chordata</taxon>
        <taxon>Craniata</taxon>
        <taxon>Vertebrata</taxon>
        <taxon>Euteleostomi</taxon>
        <taxon>Mammalia</taxon>
        <taxon>Eutheria</taxon>
        <taxon>Euarchontoglires</taxon>
        <taxon>Primates</taxon>
        <taxon>Haplorrhini</taxon>
        <taxon>Catarrhini</taxon>
        <taxon>Hominidae</taxon>
        <taxon>Homo</taxon>
    </lineage>
</organism>
<dbReference type="EMBL" id="AK092116">
    <property type="protein sequence ID" value="BAC03810.1"/>
    <property type="molecule type" value="mRNA"/>
</dbReference>
<dbReference type="EMBL" id="AK313755">
    <property type="protein sequence ID" value="BAG36494.1"/>
    <property type="molecule type" value="mRNA"/>
</dbReference>
<dbReference type="EMBL" id="CH471106">
    <property type="protein sequence ID" value="EAW84268.1"/>
    <property type="molecule type" value="Genomic_DNA"/>
</dbReference>
<dbReference type="EMBL" id="BC022523">
    <property type="protein sequence ID" value="AAH22523.1"/>
    <property type="molecule type" value="mRNA"/>
</dbReference>
<dbReference type="CCDS" id="CCDS12270.1">
    <molecule id="Q8TA94-1"/>
</dbReference>
<dbReference type="RefSeq" id="NP_660319.1">
    <molecule id="Q8TA94-1"/>
    <property type="nucleotide sequence ID" value="NM_145276.3"/>
</dbReference>
<dbReference type="RefSeq" id="XP_005259808.1">
    <property type="nucleotide sequence ID" value="XM_005259751.3"/>
</dbReference>
<dbReference type="SMR" id="Q8TA94"/>
<dbReference type="BioGRID" id="127092">
    <property type="interactions" value="34"/>
</dbReference>
<dbReference type="FunCoup" id="Q8TA94">
    <property type="interactions" value="269"/>
</dbReference>
<dbReference type="IntAct" id="Q8TA94">
    <property type="interactions" value="10"/>
</dbReference>
<dbReference type="MINT" id="Q8TA94"/>
<dbReference type="STRING" id="9606.ENSP00000293725"/>
<dbReference type="iPTMnet" id="Q8TA94"/>
<dbReference type="PhosphoSitePlus" id="Q8TA94"/>
<dbReference type="BioMuta" id="ZNF563"/>
<dbReference type="DMDM" id="74762598"/>
<dbReference type="jPOST" id="Q8TA94"/>
<dbReference type="MassIVE" id="Q8TA94"/>
<dbReference type="PaxDb" id="9606-ENSP00000293725"/>
<dbReference type="PeptideAtlas" id="Q8TA94"/>
<dbReference type="ProteomicsDB" id="73841">
    <molecule id="Q8TA94-1"/>
</dbReference>
<dbReference type="ProteomicsDB" id="73842">
    <molecule id="Q8TA94-2"/>
</dbReference>
<dbReference type="Antibodypedia" id="26035">
    <property type="antibodies" value="114 antibodies from 17 providers"/>
</dbReference>
<dbReference type="DNASU" id="147837"/>
<dbReference type="Ensembl" id="ENST00000293725.10">
    <molecule id="Q8TA94-1"/>
    <property type="protein sequence ID" value="ENSP00000293725.5"/>
    <property type="gene ID" value="ENSG00000188868.14"/>
</dbReference>
<dbReference type="GeneID" id="147837"/>
<dbReference type="KEGG" id="hsa:147837"/>
<dbReference type="MANE-Select" id="ENST00000293725.10">
    <property type="protein sequence ID" value="ENSP00000293725.5"/>
    <property type="RefSeq nucleotide sequence ID" value="NM_145276.3"/>
    <property type="RefSeq protein sequence ID" value="NP_660319.1"/>
</dbReference>
<dbReference type="UCSC" id="uc002mtp.4">
    <molecule id="Q8TA94-1"/>
    <property type="organism name" value="human"/>
</dbReference>
<dbReference type="AGR" id="HGNC:30498"/>
<dbReference type="CTD" id="147837"/>
<dbReference type="DisGeNET" id="147837"/>
<dbReference type="GeneCards" id="ZNF563"/>
<dbReference type="HGNC" id="HGNC:30498">
    <property type="gene designation" value="ZNF563"/>
</dbReference>
<dbReference type="HPA" id="ENSG00000188868">
    <property type="expression patterns" value="Tissue enhanced (testis)"/>
</dbReference>
<dbReference type="neXtProt" id="NX_Q8TA94"/>
<dbReference type="OpenTargets" id="ENSG00000188868"/>
<dbReference type="PharmGKB" id="PA134949077"/>
<dbReference type="VEuPathDB" id="HostDB:ENSG00000188868"/>
<dbReference type="eggNOG" id="KOG1721">
    <property type="taxonomic scope" value="Eukaryota"/>
</dbReference>
<dbReference type="GeneTree" id="ENSGT00950000182755"/>
<dbReference type="HOGENOM" id="CLU_002678_44_5_1"/>
<dbReference type="InParanoid" id="Q8TA94"/>
<dbReference type="OMA" id="VQYHERI"/>
<dbReference type="OrthoDB" id="427030at2759"/>
<dbReference type="PAN-GO" id="Q8TA94">
    <property type="GO annotations" value="4 GO annotations based on evolutionary models"/>
</dbReference>
<dbReference type="PhylomeDB" id="Q8TA94"/>
<dbReference type="TreeFam" id="TF338854"/>
<dbReference type="PathwayCommons" id="Q8TA94"/>
<dbReference type="Reactome" id="R-HSA-212436">
    <property type="pathway name" value="Generic Transcription Pathway"/>
</dbReference>
<dbReference type="SignaLink" id="Q8TA94"/>
<dbReference type="BioGRID-ORCS" id="147837">
    <property type="hits" value="9 hits in 1171 CRISPR screens"/>
</dbReference>
<dbReference type="ChiTaRS" id="ZNF563">
    <property type="organism name" value="human"/>
</dbReference>
<dbReference type="GenomeRNAi" id="147837"/>
<dbReference type="Pharos" id="Q8TA94">
    <property type="development level" value="Tdark"/>
</dbReference>
<dbReference type="PRO" id="PR:Q8TA94"/>
<dbReference type="Proteomes" id="UP000005640">
    <property type="component" value="Chromosome 19"/>
</dbReference>
<dbReference type="RNAct" id="Q8TA94">
    <property type="molecule type" value="protein"/>
</dbReference>
<dbReference type="Bgee" id="ENSG00000188868">
    <property type="expression patterns" value="Expressed in male germ line stem cell (sensu Vertebrata) in testis and 109 other cell types or tissues"/>
</dbReference>
<dbReference type="ExpressionAtlas" id="Q8TA94">
    <property type="expression patterns" value="baseline and differential"/>
</dbReference>
<dbReference type="GO" id="GO:0005634">
    <property type="term" value="C:nucleus"/>
    <property type="evidence" value="ECO:0000318"/>
    <property type="project" value="GO_Central"/>
</dbReference>
<dbReference type="GO" id="GO:0000981">
    <property type="term" value="F:DNA-binding transcription factor activity, RNA polymerase II-specific"/>
    <property type="evidence" value="ECO:0000318"/>
    <property type="project" value="GO_Central"/>
</dbReference>
<dbReference type="GO" id="GO:0000977">
    <property type="term" value="F:RNA polymerase II transcription regulatory region sequence-specific DNA binding"/>
    <property type="evidence" value="ECO:0000318"/>
    <property type="project" value="GO_Central"/>
</dbReference>
<dbReference type="GO" id="GO:0008270">
    <property type="term" value="F:zinc ion binding"/>
    <property type="evidence" value="ECO:0007669"/>
    <property type="project" value="UniProtKB-KW"/>
</dbReference>
<dbReference type="GO" id="GO:0045944">
    <property type="term" value="P:positive regulation of transcription by RNA polymerase II"/>
    <property type="evidence" value="ECO:0007669"/>
    <property type="project" value="UniProtKB-ARBA"/>
</dbReference>
<dbReference type="GO" id="GO:0006357">
    <property type="term" value="P:regulation of transcription by RNA polymerase II"/>
    <property type="evidence" value="ECO:0000318"/>
    <property type="project" value="GO_Central"/>
</dbReference>
<dbReference type="CDD" id="cd07765">
    <property type="entry name" value="KRAB_A-box"/>
    <property type="match status" value="1"/>
</dbReference>
<dbReference type="FunFam" id="3.30.160.60:FF:000838">
    <property type="entry name" value="Zinc finger protein 14"/>
    <property type="match status" value="1"/>
</dbReference>
<dbReference type="FunFam" id="3.30.160.60:FF:000240">
    <property type="entry name" value="Zinc finger protein 250"/>
    <property type="match status" value="1"/>
</dbReference>
<dbReference type="FunFam" id="3.30.160.60:FF:000193">
    <property type="entry name" value="Zinc finger protein 300"/>
    <property type="match status" value="1"/>
</dbReference>
<dbReference type="FunFam" id="3.30.160.60:FF:000184">
    <property type="entry name" value="Zinc finger protein 333"/>
    <property type="match status" value="3"/>
</dbReference>
<dbReference type="FunFam" id="3.30.160.60:FF:001433">
    <property type="entry name" value="Zinc finger protein 44"/>
    <property type="match status" value="1"/>
</dbReference>
<dbReference type="FunFam" id="3.30.160.60:FF:001174">
    <property type="entry name" value="zinc finger protein 527 isoform X1"/>
    <property type="match status" value="1"/>
</dbReference>
<dbReference type="FunFam" id="3.30.160.60:FF:002254">
    <property type="entry name" value="Zinc finger protein 540"/>
    <property type="match status" value="1"/>
</dbReference>
<dbReference type="FunFam" id="3.30.160.60:FF:000493">
    <property type="entry name" value="Zinc finger protein 805"/>
    <property type="match status" value="2"/>
</dbReference>
<dbReference type="Gene3D" id="6.10.140.140">
    <property type="match status" value="1"/>
</dbReference>
<dbReference type="Gene3D" id="3.30.160.60">
    <property type="entry name" value="Classic Zinc Finger"/>
    <property type="match status" value="11"/>
</dbReference>
<dbReference type="InterPro" id="IPR050329">
    <property type="entry name" value="GLI_C2H2-zinc-finger"/>
</dbReference>
<dbReference type="InterPro" id="IPR001909">
    <property type="entry name" value="KRAB"/>
</dbReference>
<dbReference type="InterPro" id="IPR036051">
    <property type="entry name" value="KRAB_dom_sf"/>
</dbReference>
<dbReference type="InterPro" id="IPR036236">
    <property type="entry name" value="Znf_C2H2_sf"/>
</dbReference>
<dbReference type="InterPro" id="IPR013087">
    <property type="entry name" value="Znf_C2H2_type"/>
</dbReference>
<dbReference type="PANTHER" id="PTHR19818:SF161">
    <property type="entry name" value="C2H2-TYPE DOMAIN-CONTAINING PROTEIN"/>
    <property type="match status" value="1"/>
</dbReference>
<dbReference type="PANTHER" id="PTHR19818">
    <property type="entry name" value="ZINC FINGER PROTEIN ZIC AND GLI"/>
    <property type="match status" value="1"/>
</dbReference>
<dbReference type="Pfam" id="PF01352">
    <property type="entry name" value="KRAB"/>
    <property type="match status" value="1"/>
</dbReference>
<dbReference type="Pfam" id="PF00096">
    <property type="entry name" value="zf-C2H2"/>
    <property type="match status" value="9"/>
</dbReference>
<dbReference type="SMART" id="SM00349">
    <property type="entry name" value="KRAB"/>
    <property type="match status" value="1"/>
</dbReference>
<dbReference type="SMART" id="SM00355">
    <property type="entry name" value="ZnF_C2H2"/>
    <property type="match status" value="11"/>
</dbReference>
<dbReference type="SUPFAM" id="SSF57667">
    <property type="entry name" value="beta-beta-alpha zinc fingers"/>
    <property type="match status" value="7"/>
</dbReference>
<dbReference type="SUPFAM" id="SSF109640">
    <property type="entry name" value="KRAB domain (Kruppel-associated box)"/>
    <property type="match status" value="1"/>
</dbReference>
<dbReference type="PROSITE" id="PS50805">
    <property type="entry name" value="KRAB"/>
    <property type="match status" value="1"/>
</dbReference>
<dbReference type="PROSITE" id="PS00028">
    <property type="entry name" value="ZINC_FINGER_C2H2_1"/>
    <property type="match status" value="10"/>
</dbReference>
<dbReference type="PROSITE" id="PS50157">
    <property type="entry name" value="ZINC_FINGER_C2H2_2"/>
    <property type="match status" value="12"/>
</dbReference>
<evidence type="ECO:0000255" key="1">
    <source>
        <dbReference type="PROSITE-ProRule" id="PRU00042"/>
    </source>
</evidence>
<evidence type="ECO:0000255" key="2">
    <source>
        <dbReference type="PROSITE-ProRule" id="PRU00119"/>
    </source>
</evidence>
<evidence type="ECO:0000303" key="3">
    <source>
    </source>
</evidence>
<evidence type="ECO:0000305" key="4"/>
<keyword id="KW-0025">Alternative splicing</keyword>
<keyword id="KW-0238">DNA-binding</keyword>
<keyword id="KW-0479">Metal-binding</keyword>
<keyword id="KW-0539">Nucleus</keyword>
<keyword id="KW-1267">Proteomics identification</keyword>
<keyword id="KW-1185">Reference proteome</keyword>
<keyword id="KW-0677">Repeat</keyword>
<keyword id="KW-0804">Transcription</keyword>
<keyword id="KW-0805">Transcription regulation</keyword>
<keyword id="KW-0862">Zinc</keyword>
<keyword id="KW-0863">Zinc-finger</keyword>
<proteinExistence type="evidence at protein level"/>
<accession>Q8TA94</accession>
<accession>B2R9E7</accession>
<accession>Q8NAT7</accession>
<name>ZN563_HUMAN</name>
<protein>
    <recommendedName>
        <fullName>Zinc finger protein 563</fullName>
    </recommendedName>
</protein>
<reference key="1">
    <citation type="journal article" date="2004" name="Nat. Genet.">
        <title>Complete sequencing and characterization of 21,243 full-length human cDNAs.</title>
        <authorList>
            <person name="Ota T."/>
            <person name="Suzuki Y."/>
            <person name="Nishikawa T."/>
            <person name="Otsuki T."/>
            <person name="Sugiyama T."/>
            <person name="Irie R."/>
            <person name="Wakamatsu A."/>
            <person name="Hayashi K."/>
            <person name="Sato H."/>
            <person name="Nagai K."/>
            <person name="Kimura K."/>
            <person name="Makita H."/>
            <person name="Sekine M."/>
            <person name="Obayashi M."/>
            <person name="Nishi T."/>
            <person name="Shibahara T."/>
            <person name="Tanaka T."/>
            <person name="Ishii S."/>
            <person name="Yamamoto J."/>
            <person name="Saito K."/>
            <person name="Kawai Y."/>
            <person name="Isono Y."/>
            <person name="Nakamura Y."/>
            <person name="Nagahari K."/>
            <person name="Murakami K."/>
            <person name="Yasuda T."/>
            <person name="Iwayanagi T."/>
            <person name="Wagatsuma M."/>
            <person name="Shiratori A."/>
            <person name="Sudo H."/>
            <person name="Hosoiri T."/>
            <person name="Kaku Y."/>
            <person name="Kodaira H."/>
            <person name="Kondo H."/>
            <person name="Sugawara M."/>
            <person name="Takahashi M."/>
            <person name="Kanda K."/>
            <person name="Yokoi T."/>
            <person name="Furuya T."/>
            <person name="Kikkawa E."/>
            <person name="Omura Y."/>
            <person name="Abe K."/>
            <person name="Kamihara K."/>
            <person name="Katsuta N."/>
            <person name="Sato K."/>
            <person name="Tanikawa M."/>
            <person name="Yamazaki M."/>
            <person name="Ninomiya K."/>
            <person name="Ishibashi T."/>
            <person name="Yamashita H."/>
            <person name="Murakawa K."/>
            <person name="Fujimori K."/>
            <person name="Tanai H."/>
            <person name="Kimata M."/>
            <person name="Watanabe M."/>
            <person name="Hiraoka S."/>
            <person name="Chiba Y."/>
            <person name="Ishida S."/>
            <person name="Ono Y."/>
            <person name="Takiguchi S."/>
            <person name="Watanabe S."/>
            <person name="Yosida M."/>
            <person name="Hotuta T."/>
            <person name="Kusano J."/>
            <person name="Kanehori K."/>
            <person name="Takahashi-Fujii A."/>
            <person name="Hara H."/>
            <person name="Tanase T.-O."/>
            <person name="Nomura Y."/>
            <person name="Togiya S."/>
            <person name="Komai F."/>
            <person name="Hara R."/>
            <person name="Takeuchi K."/>
            <person name="Arita M."/>
            <person name="Imose N."/>
            <person name="Musashino K."/>
            <person name="Yuuki H."/>
            <person name="Oshima A."/>
            <person name="Sasaki N."/>
            <person name="Aotsuka S."/>
            <person name="Yoshikawa Y."/>
            <person name="Matsunawa H."/>
            <person name="Ichihara T."/>
            <person name="Shiohata N."/>
            <person name="Sano S."/>
            <person name="Moriya S."/>
            <person name="Momiyama H."/>
            <person name="Satoh N."/>
            <person name="Takami S."/>
            <person name="Terashima Y."/>
            <person name="Suzuki O."/>
            <person name="Nakagawa S."/>
            <person name="Senoh A."/>
            <person name="Mizoguchi H."/>
            <person name="Goto Y."/>
            <person name="Shimizu F."/>
            <person name="Wakebe H."/>
            <person name="Hishigaki H."/>
            <person name="Watanabe T."/>
            <person name="Sugiyama A."/>
            <person name="Takemoto M."/>
            <person name="Kawakami B."/>
            <person name="Yamazaki M."/>
            <person name="Watanabe K."/>
            <person name="Kumagai A."/>
            <person name="Itakura S."/>
            <person name="Fukuzumi Y."/>
            <person name="Fujimori Y."/>
            <person name="Komiyama M."/>
            <person name="Tashiro H."/>
            <person name="Tanigami A."/>
            <person name="Fujiwara T."/>
            <person name="Ono T."/>
            <person name="Yamada K."/>
            <person name="Fujii Y."/>
            <person name="Ozaki K."/>
            <person name="Hirao M."/>
            <person name="Ohmori Y."/>
            <person name="Kawabata A."/>
            <person name="Hikiji T."/>
            <person name="Kobatake N."/>
            <person name="Inagaki H."/>
            <person name="Ikema Y."/>
            <person name="Okamoto S."/>
            <person name="Okitani R."/>
            <person name="Kawakami T."/>
            <person name="Noguchi S."/>
            <person name="Itoh T."/>
            <person name="Shigeta K."/>
            <person name="Senba T."/>
            <person name="Matsumura K."/>
            <person name="Nakajima Y."/>
            <person name="Mizuno T."/>
            <person name="Morinaga M."/>
            <person name="Sasaki M."/>
            <person name="Togashi T."/>
            <person name="Oyama M."/>
            <person name="Hata H."/>
            <person name="Watanabe M."/>
            <person name="Komatsu T."/>
            <person name="Mizushima-Sugano J."/>
            <person name="Satoh T."/>
            <person name="Shirai Y."/>
            <person name="Takahashi Y."/>
            <person name="Nakagawa K."/>
            <person name="Okumura K."/>
            <person name="Nagase T."/>
            <person name="Nomura N."/>
            <person name="Kikuchi H."/>
            <person name="Masuho Y."/>
            <person name="Yamashita R."/>
            <person name="Nakai K."/>
            <person name="Yada T."/>
            <person name="Nakamura Y."/>
            <person name="Ohara O."/>
            <person name="Isogai T."/>
            <person name="Sugano S."/>
        </authorList>
    </citation>
    <scope>NUCLEOTIDE SEQUENCE [LARGE SCALE MRNA] (ISOFORMS 1 AND 2)</scope>
    <source>
        <tissue>Spleen</tissue>
    </source>
</reference>
<reference key="2">
    <citation type="submission" date="2005-07" db="EMBL/GenBank/DDBJ databases">
        <authorList>
            <person name="Mural R.J."/>
            <person name="Istrail S."/>
            <person name="Sutton G.G."/>
            <person name="Florea L."/>
            <person name="Halpern A.L."/>
            <person name="Mobarry C.M."/>
            <person name="Lippert R."/>
            <person name="Walenz B."/>
            <person name="Shatkay H."/>
            <person name="Dew I."/>
            <person name="Miller J.R."/>
            <person name="Flanigan M.J."/>
            <person name="Edwards N.J."/>
            <person name="Bolanos R."/>
            <person name="Fasulo D."/>
            <person name="Halldorsson B.V."/>
            <person name="Hannenhalli S."/>
            <person name="Turner R."/>
            <person name="Yooseph S."/>
            <person name="Lu F."/>
            <person name="Nusskern D.R."/>
            <person name="Shue B.C."/>
            <person name="Zheng X.H."/>
            <person name="Zhong F."/>
            <person name="Delcher A.L."/>
            <person name="Huson D.H."/>
            <person name="Kravitz S.A."/>
            <person name="Mouchard L."/>
            <person name="Reinert K."/>
            <person name="Remington K.A."/>
            <person name="Clark A.G."/>
            <person name="Waterman M.S."/>
            <person name="Eichler E.E."/>
            <person name="Adams M.D."/>
            <person name="Hunkapiller M.W."/>
            <person name="Myers E.W."/>
            <person name="Venter J.C."/>
        </authorList>
    </citation>
    <scope>NUCLEOTIDE SEQUENCE [LARGE SCALE GENOMIC DNA]</scope>
</reference>
<reference key="3">
    <citation type="journal article" date="2004" name="Genome Res.">
        <title>The status, quality, and expansion of the NIH full-length cDNA project: the Mammalian Gene Collection (MGC).</title>
        <authorList>
            <consortium name="The MGC Project Team"/>
        </authorList>
    </citation>
    <scope>NUCLEOTIDE SEQUENCE [LARGE SCALE MRNA] (ISOFORM 1)</scope>
    <source>
        <tissue>Brain</tissue>
    </source>
</reference>
<gene>
    <name type="primary">ZNF563</name>
</gene>
<sequence length="476" mass="55434">MDAVAFEDVAVNFTQEEWALLGPSQKNLYRYVMQETIRNLDCIRMIWEEQNTEDQYKNPRRNLRCHMVERFSESKDSSQCGETFSLIRDSIVNNSICPGEDPCQSAECEEVIMGHLSLNSHIRVDSGHKPHEYQEYGEKPHTHKQRGKAFSYHHSFQSRGRPHTGKKRYECKECGKTFSSRRNLRRHMVVQGGNRPYKCKLCGKAFFWPSLLRMHERTHTGEKPYECKQCSKAFPFYSSYRRHERMHTGEKPYECKQCSKALPDSSSYIRHERTHTGEKPYTCKQCGKAFSVSSSLRRHETTHSAEKPYECKQCGKTFHHLGSFQIHMKRHTGDRPHKCKICGKGFDRPSLVRYHERIHTGEKPYECKQCGKTLSHSSSFRRHMIMHTGGGPHKCKICGKAFVYPSVCQRHEKSHSGEKPYECKQCGKALSHSSSFRRHMVMHTGDGPNKCKVCGKAFVYPSVCQRHEKTHWRETI</sequence>
<comment type="function">
    <text>May be involved in transcriptional regulation.</text>
</comment>
<comment type="interaction">
    <interactant intactId="EBI-11792334">
        <id>Q8TA94</id>
    </interactant>
    <interactant intactId="EBI-12012928">
        <id>P60371</id>
        <label>KRTAP10-6</label>
    </interactant>
    <organismsDiffer>false</organismsDiffer>
    <experiments>3</experiments>
</comment>
<comment type="subcellular location">
    <subcellularLocation>
        <location evidence="4">Nucleus</location>
    </subcellularLocation>
</comment>
<comment type="alternative products">
    <event type="alternative splicing"/>
    <isoform>
        <id>Q8TA94-1</id>
        <name>1</name>
        <sequence type="displayed"/>
    </isoform>
    <isoform>
        <id>Q8TA94-2</id>
        <name>2</name>
        <sequence type="described" ref="VSP_016381 VSP_016382"/>
    </isoform>
</comment>
<comment type="similarity">
    <text evidence="4">Belongs to the krueppel C2H2-type zinc-finger protein family.</text>
</comment>
<feature type="chain" id="PRO_0000047653" description="Zinc finger protein 563">
    <location>
        <begin position="1"/>
        <end position="476"/>
    </location>
</feature>
<feature type="domain" description="KRAB" evidence="2">
    <location>
        <begin position="4"/>
        <end position="96"/>
    </location>
</feature>
<feature type="zinc finger region" description="C2H2-type 1; degenerate" evidence="1">
    <location>
        <begin position="101"/>
        <end position="125"/>
    </location>
</feature>
<feature type="zinc finger region" description="C2H2-type 2; degenerate" evidence="1">
    <location>
        <begin position="169"/>
        <end position="191"/>
    </location>
</feature>
<feature type="zinc finger region" description="C2H2-type 3" evidence="1">
    <location>
        <begin position="197"/>
        <end position="219"/>
    </location>
</feature>
<feature type="zinc finger region" description="C2H2-type 4" evidence="1">
    <location>
        <begin position="225"/>
        <end position="247"/>
    </location>
</feature>
<feature type="zinc finger region" description="C2H2-type 5" evidence="1">
    <location>
        <begin position="253"/>
        <end position="275"/>
    </location>
</feature>
<feature type="zinc finger region" description="C2H2-type 6" evidence="1">
    <location>
        <begin position="281"/>
        <end position="303"/>
    </location>
</feature>
<feature type="zinc finger region" description="C2H2-type 7" evidence="1">
    <location>
        <begin position="309"/>
        <end position="331"/>
    </location>
</feature>
<feature type="zinc finger region" description="C2H2-type 8" evidence="1">
    <location>
        <begin position="337"/>
        <end position="359"/>
    </location>
</feature>
<feature type="zinc finger region" description="C2H2-type 9" evidence="1">
    <location>
        <begin position="365"/>
        <end position="387"/>
    </location>
</feature>
<feature type="zinc finger region" description="C2H2-type 10" evidence="1">
    <location>
        <begin position="393"/>
        <end position="415"/>
    </location>
</feature>
<feature type="zinc finger region" description="C2H2-type 11" evidence="1">
    <location>
        <begin position="421"/>
        <end position="443"/>
    </location>
</feature>
<feature type="zinc finger region" description="C2H2-type 12" evidence="1">
    <location>
        <begin position="449"/>
        <end position="471"/>
    </location>
</feature>
<feature type="splice variant" id="VSP_016381" description="In isoform 2." evidence="3">
    <original>CKLCGKAFFWPSLLRMHERTHTGEKPYECKQ</original>
    <variation>FPIEDMRECTLGRNRMNVSSVLKPCLIPVP</variation>
    <location>
        <begin position="199"/>
        <end position="229"/>
    </location>
</feature>
<feature type="splice variant" id="VSP_016382" description="In isoform 2." evidence="3">
    <location>
        <begin position="230"/>
        <end position="476"/>
    </location>
</feature>